<proteinExistence type="evidence at protein level"/>
<sequence>MRSIASKVLVIGVVVVLAFFVTQYVLLNTTVFNSIMERKKEEAKHLVESVYGILERAYEMEQKGELTREQAQELAKSLIGKIRYDDNNYFWINDTHPRMVFHPIKPEMNGQDLSNYKDPNGVYLFNEMVKVAKEKGEGFVSYSWPKAGSDKPEPKISYVKLFEPWGWIVGTGIYVDDVKVTVGNLIFRNVLTVSVIGIAVIIMIFFYGRVLSRKTKAVLSALEKISSGDLSVSVDIKSKDEFGLIAQKLNETVGNLRKMVQEIDKSQDEVERVSEELFALSQQLRSALEEIARASDTISKEVQNASASIEEVTSGSEEVSANSQNISKLIQEISENADNIADFARNGQRVLEEAVKKVEDVSENSRETADVVSNVTESARNIEEIVRTIQSIAEQTNLLALNAAIEAARAGEAGRGFAVVADEIRKLAEESQKATEEISQILENIREGVERTNEMSKKNVEITKDARRLVEESYESFNQIVTRIEDLAARIEGIAASAQELSAASEEMSSALDAVAKTTTTVADEVEEVSENITEQEKAAKRIADIGTELKKLSDELKEDVERFKI</sequence>
<keyword id="KW-1003">Cell membrane</keyword>
<keyword id="KW-0145">Chemotaxis</keyword>
<keyword id="KW-0472">Membrane</keyword>
<keyword id="KW-0488">Methylation</keyword>
<keyword id="KW-1185">Reference proteome</keyword>
<keyword id="KW-0807">Transducer</keyword>
<keyword id="KW-0812">Transmembrane</keyword>
<keyword id="KW-1133">Transmembrane helix</keyword>
<evidence type="ECO:0000250" key="1"/>
<evidence type="ECO:0000255" key="2"/>
<evidence type="ECO:0000255" key="3">
    <source>
        <dbReference type="PROSITE-ProRule" id="PRU00102"/>
    </source>
</evidence>
<evidence type="ECO:0000255" key="4">
    <source>
        <dbReference type="PROSITE-ProRule" id="PRU00284"/>
    </source>
</evidence>
<evidence type="ECO:0000269" key="5">
    <source>
    </source>
</evidence>
<evidence type="ECO:0000305" key="6"/>
<name>MCP4_THEMA</name>
<organism>
    <name type="scientific">Thermotoga maritima (strain ATCC 43589 / DSM 3109 / JCM 10099 / NBRC 100826 / MSB8)</name>
    <dbReference type="NCBI Taxonomy" id="243274"/>
    <lineage>
        <taxon>Bacteria</taxon>
        <taxon>Thermotogati</taxon>
        <taxon>Thermotogota</taxon>
        <taxon>Thermotogae</taxon>
        <taxon>Thermotogales</taxon>
        <taxon>Thermotogaceae</taxon>
        <taxon>Thermotoga</taxon>
    </lineage>
</organism>
<gene>
    <name type="primary">mcp4</name>
    <name type="ordered locus">TM_1428</name>
</gene>
<protein>
    <recommendedName>
        <fullName>Methyl-accepting chemotaxis protein 4</fullName>
    </recommendedName>
</protein>
<comment type="function">
    <text evidence="1">Chemotactic-signal transducers respond to changes in the concentration of attractants and repellents in the environment, transduce a signal from the outside to the inside of the cell, and facilitate sensory adaptation through the variation of the level of methylation.</text>
</comment>
<comment type="subcellular location">
    <subcellularLocation>
        <location evidence="6">Cell membrane</location>
        <topology evidence="6">Multi-pass membrane protein</topology>
    </subcellularLocation>
</comment>
<comment type="similarity">
    <text evidence="6">Belongs to the methyl-accepting chemotaxis (MCP) protein family.</text>
</comment>
<dbReference type="EMBL" id="AE000512">
    <property type="protein sequence ID" value="AAD36498.1"/>
    <property type="molecule type" value="Genomic_DNA"/>
</dbReference>
<dbReference type="PIR" id="A72254">
    <property type="entry name" value="A72254"/>
</dbReference>
<dbReference type="RefSeq" id="NP_229228.1">
    <property type="nucleotide sequence ID" value="NC_000853.1"/>
</dbReference>
<dbReference type="RefSeq" id="WP_004081682.1">
    <property type="nucleotide sequence ID" value="NC_000853.1"/>
</dbReference>
<dbReference type="SMR" id="Q9X1E2"/>
<dbReference type="STRING" id="243274.TM_1428"/>
<dbReference type="PaxDb" id="243274-THEMA_07175"/>
<dbReference type="EnsemblBacteria" id="AAD36498">
    <property type="protein sequence ID" value="AAD36498"/>
    <property type="gene ID" value="TM_1428"/>
</dbReference>
<dbReference type="KEGG" id="tma:TM1428"/>
<dbReference type="KEGG" id="tmi:THEMA_07175"/>
<dbReference type="KEGG" id="tmm:Tmari_1434"/>
<dbReference type="KEGG" id="tmw:THMA_1458"/>
<dbReference type="eggNOG" id="COG0840">
    <property type="taxonomic scope" value="Bacteria"/>
</dbReference>
<dbReference type="InParanoid" id="Q9X1E2"/>
<dbReference type="OrthoDB" id="9810264at2"/>
<dbReference type="Proteomes" id="UP000008183">
    <property type="component" value="Chromosome"/>
</dbReference>
<dbReference type="GO" id="GO:0005886">
    <property type="term" value="C:plasma membrane"/>
    <property type="evidence" value="ECO:0000318"/>
    <property type="project" value="GO_Central"/>
</dbReference>
<dbReference type="GO" id="GO:0004888">
    <property type="term" value="F:transmembrane signaling receptor activity"/>
    <property type="evidence" value="ECO:0000318"/>
    <property type="project" value="GO_Central"/>
</dbReference>
<dbReference type="GO" id="GO:0006935">
    <property type="term" value="P:chemotaxis"/>
    <property type="evidence" value="ECO:0000318"/>
    <property type="project" value="GO_Central"/>
</dbReference>
<dbReference type="GO" id="GO:0007165">
    <property type="term" value="P:signal transduction"/>
    <property type="evidence" value="ECO:0007669"/>
    <property type="project" value="UniProtKB-KW"/>
</dbReference>
<dbReference type="CDD" id="cd06225">
    <property type="entry name" value="HAMP"/>
    <property type="match status" value="1"/>
</dbReference>
<dbReference type="CDD" id="cd11386">
    <property type="entry name" value="MCP_signal"/>
    <property type="match status" value="1"/>
</dbReference>
<dbReference type="FunFam" id="1.10.287.950:FF:000037">
    <property type="entry name" value="Methyl-accepting chemotaxis protein"/>
    <property type="match status" value="1"/>
</dbReference>
<dbReference type="Gene3D" id="6.10.340.10">
    <property type="match status" value="1"/>
</dbReference>
<dbReference type="Gene3D" id="1.10.287.950">
    <property type="entry name" value="Methyl-accepting chemotaxis protein"/>
    <property type="match status" value="1"/>
</dbReference>
<dbReference type="Gene3D" id="3.30.450.20">
    <property type="entry name" value="PAS domain"/>
    <property type="match status" value="1"/>
</dbReference>
<dbReference type="InterPro" id="IPR004090">
    <property type="entry name" value="Chemotax_Me-accpt_rcpt"/>
</dbReference>
<dbReference type="InterPro" id="IPR003660">
    <property type="entry name" value="HAMP_dom"/>
</dbReference>
<dbReference type="InterPro" id="IPR004089">
    <property type="entry name" value="MCPsignal_dom"/>
</dbReference>
<dbReference type="InterPro" id="IPR033480">
    <property type="entry name" value="sCache_2"/>
</dbReference>
<dbReference type="PANTHER" id="PTHR32089:SF119">
    <property type="entry name" value="METHYL-ACCEPTING CHEMOTAXIS PROTEIN CTPL"/>
    <property type="match status" value="1"/>
</dbReference>
<dbReference type="PANTHER" id="PTHR32089">
    <property type="entry name" value="METHYL-ACCEPTING CHEMOTAXIS PROTEIN MCPB"/>
    <property type="match status" value="1"/>
</dbReference>
<dbReference type="Pfam" id="PF00672">
    <property type="entry name" value="HAMP"/>
    <property type="match status" value="1"/>
</dbReference>
<dbReference type="Pfam" id="PF00015">
    <property type="entry name" value="MCPsignal"/>
    <property type="match status" value="1"/>
</dbReference>
<dbReference type="Pfam" id="PF17200">
    <property type="entry name" value="sCache_2"/>
    <property type="match status" value="1"/>
</dbReference>
<dbReference type="PRINTS" id="PR00260">
    <property type="entry name" value="CHEMTRNSDUCR"/>
</dbReference>
<dbReference type="SMART" id="SM01049">
    <property type="entry name" value="Cache_2"/>
    <property type="match status" value="1"/>
</dbReference>
<dbReference type="SMART" id="SM00304">
    <property type="entry name" value="HAMP"/>
    <property type="match status" value="1"/>
</dbReference>
<dbReference type="SMART" id="SM00283">
    <property type="entry name" value="MA"/>
    <property type="match status" value="1"/>
</dbReference>
<dbReference type="SUPFAM" id="SSF58104">
    <property type="entry name" value="Methyl-accepting chemotaxis protein (MCP) signaling domain"/>
    <property type="match status" value="1"/>
</dbReference>
<dbReference type="PROSITE" id="PS50111">
    <property type="entry name" value="CHEMOTAXIS_TRANSDUC_2"/>
    <property type="match status" value="1"/>
</dbReference>
<dbReference type="PROSITE" id="PS50885">
    <property type="entry name" value="HAMP"/>
    <property type="match status" value="1"/>
</dbReference>
<reference key="1">
    <citation type="journal article" date="1999" name="Nature">
        <title>Evidence for lateral gene transfer between Archaea and Bacteria from genome sequence of Thermotoga maritima.</title>
        <authorList>
            <person name="Nelson K.E."/>
            <person name="Clayton R.A."/>
            <person name="Gill S.R."/>
            <person name="Gwinn M.L."/>
            <person name="Dodson R.J."/>
            <person name="Haft D.H."/>
            <person name="Hickey E.K."/>
            <person name="Peterson J.D."/>
            <person name="Nelson W.C."/>
            <person name="Ketchum K.A."/>
            <person name="McDonald L.A."/>
            <person name="Utterback T.R."/>
            <person name="Malek J.A."/>
            <person name="Linher K.D."/>
            <person name="Garrett M.M."/>
            <person name="Stewart A.M."/>
            <person name="Cotton M.D."/>
            <person name="Pratt M.S."/>
            <person name="Phillips C.A."/>
            <person name="Richardson D.L."/>
            <person name="Heidelberg J.F."/>
            <person name="Sutton G.G."/>
            <person name="Fleischmann R.D."/>
            <person name="Eisen J.A."/>
            <person name="White O."/>
            <person name="Salzberg S.L."/>
            <person name="Smith H.O."/>
            <person name="Venter J.C."/>
            <person name="Fraser C.M."/>
        </authorList>
    </citation>
    <scope>NUCLEOTIDE SEQUENCE [LARGE SCALE GENOMIC DNA]</scope>
    <source>
        <strain>ATCC 43589 / DSM 3109 / JCM 10099 / NBRC 100826 / MSB8</strain>
    </source>
</reference>
<reference key="2">
    <citation type="journal article" date="2006" name="J. Bacteriol.">
        <title>Identification of methylation sites in Thermotoga maritima chemotaxis receptors.</title>
        <authorList>
            <person name="Perez E."/>
            <person name="Zheng H."/>
            <person name="Stock A.M."/>
        </authorList>
    </citation>
    <scope>METHYLATION AT GLU-310; GLU-317; GLN-499 AND GLU-506</scope>
    <scope>DEAMIDATION AT GLN-499</scope>
</reference>
<accession>Q9X1E2</accession>
<feature type="chain" id="PRO_0000250996" description="Methyl-accepting chemotaxis protein 4">
    <location>
        <begin position="1"/>
        <end position="566"/>
    </location>
</feature>
<feature type="transmembrane region" description="Helical" evidence="2">
    <location>
        <begin position="8"/>
        <end position="28"/>
    </location>
</feature>
<feature type="transmembrane region" description="Helical" evidence="2">
    <location>
        <begin position="190"/>
        <end position="210"/>
    </location>
</feature>
<feature type="domain" description="HAMP" evidence="3">
    <location>
        <begin position="209"/>
        <end position="261"/>
    </location>
</feature>
<feature type="domain" description="Methyl-accepting transducer" evidence="4">
    <location>
        <begin position="280"/>
        <end position="516"/>
    </location>
</feature>
<feature type="modified residue" description="Glutamate methyl ester (Glu)" evidence="5">
    <location>
        <position position="310"/>
    </location>
</feature>
<feature type="modified residue" description="Glutamate methyl ester (Glu)" evidence="5">
    <location>
        <position position="317"/>
    </location>
</feature>
<feature type="modified residue" description="Glutamate methyl ester (Gln)" evidence="5">
    <location>
        <position position="499"/>
    </location>
</feature>
<feature type="modified residue" description="Glutamate methyl ester (Glu)" evidence="5">
    <location>
        <position position="506"/>
    </location>
</feature>